<comment type="function">
    <text evidence="1">Recruits TFIIH to the initiation complex and stimulates the RNA polymerase II C-terminal domain kinase and DNA-dependent ATPase activities of TFIIH. Both TFIIH and TFIIE are required for promoter clearance by RNA polymerase (By similarity).</text>
</comment>
<comment type="subunit">
    <text evidence="5">TFIIE is a tetramer of two alpha (tfa1) and two beta (tfa2) subunits.</text>
</comment>
<comment type="subcellular location">
    <subcellularLocation>
        <location evidence="6">Nucleus</location>
    </subcellularLocation>
</comment>
<comment type="similarity">
    <text evidence="7">Belongs to the TFIIE alpha subunit family.</text>
</comment>
<gene>
    <name type="primary">tfa1</name>
    <name type="ORF">SPAC458.07</name>
    <name type="ORF">SPAPYUG7.01</name>
</gene>
<organism>
    <name type="scientific">Schizosaccharomyces pombe (strain 972 / ATCC 24843)</name>
    <name type="common">Fission yeast</name>
    <dbReference type="NCBI Taxonomy" id="284812"/>
    <lineage>
        <taxon>Eukaryota</taxon>
        <taxon>Fungi</taxon>
        <taxon>Dikarya</taxon>
        <taxon>Ascomycota</taxon>
        <taxon>Taphrinomycotina</taxon>
        <taxon>Schizosaccharomycetes</taxon>
        <taxon>Schizosaccharomycetales</taxon>
        <taxon>Schizosaccharomycetaceae</taxon>
        <taxon>Schizosaccharomyces</taxon>
    </lineage>
</organism>
<keyword id="KW-0479">Metal-binding</keyword>
<keyword id="KW-0539">Nucleus</keyword>
<keyword id="KW-1185">Reference proteome</keyword>
<keyword id="KW-0804">Transcription</keyword>
<keyword id="KW-0805">Transcription regulation</keyword>
<keyword id="KW-0862">Zinc</keyword>
<keyword id="KW-0863">Zinc-finger</keyword>
<accession>Q9P3W1</accession>
<accession>Q5R229</accession>
<accession>Q9C1W1</accession>
<accession>Q9P7Z0</accession>
<protein>
    <recommendedName>
        <fullName>Transcription initiation factor IIE subunit alpha</fullName>
        <shortName>TFIIE-alpha</shortName>
    </recommendedName>
</protein>
<feature type="chain" id="PRO_0000211224" description="Transcription initiation factor IIE subunit alpha">
    <location>
        <begin position="1"/>
        <end position="434"/>
    </location>
</feature>
<feature type="domain" description="HTH TFE/IIEalpha-type" evidence="3">
    <location>
        <begin position="8"/>
        <end position="99"/>
    </location>
</feature>
<feature type="zinc finger region" description="C4-type" evidence="2">
    <location>
        <begin position="124"/>
        <end position="151"/>
    </location>
</feature>
<feature type="region of interest" description="Disordered" evidence="4">
    <location>
        <begin position="217"/>
        <end position="251"/>
    </location>
</feature>
<feature type="region of interest" description="Disordered" evidence="4">
    <location>
        <begin position="357"/>
        <end position="408"/>
    </location>
</feature>
<feature type="region of interest" description="Disordered" evidence="4">
    <location>
        <begin position="415"/>
        <end position="434"/>
    </location>
</feature>
<feature type="compositionally biased region" description="Polar residues" evidence="4">
    <location>
        <begin position="226"/>
        <end position="238"/>
    </location>
</feature>
<feature type="compositionally biased region" description="Basic and acidic residues" evidence="4">
    <location>
        <begin position="241"/>
        <end position="251"/>
    </location>
</feature>
<feature type="compositionally biased region" description="Basic and acidic residues" evidence="4">
    <location>
        <begin position="376"/>
        <end position="385"/>
    </location>
</feature>
<feature type="compositionally biased region" description="Polar residues" evidence="4">
    <location>
        <begin position="386"/>
        <end position="399"/>
    </location>
</feature>
<feature type="compositionally biased region" description="Acidic residues" evidence="4">
    <location>
        <begin position="419"/>
        <end position="434"/>
    </location>
</feature>
<sequence length="434" mass="49117">MSNAPEIVQRLIKMIMRAFYETRHIIFMDAILRHSALTDEQTALLMGIPIKECRFIAGKLREDRLLAIQSRTEMKEGQQRQYHTTYFYIDFCSTIDSIKWRMHQLVKTVEDRMRNDFDSKGYVCPFCNKKFSSLDVLSLVTNEGTFACNVCGTELKDDEESAEMMSSQKRLGKLMGQVNGIIDALKRVDEIVVPQNNFQSALEHAVPVSLDTQNLSQQNLSKSNSDVRLSTSSPSITVDFSADKETDEKRERNCDKQVKAAQNILPEWHATSTISGSITRAGAKDAALHSFRTETVNEVQDTKTDITSEKSALDAYYATLRAKQKEESEFMDSENVDDEEDDDFLDVTTATSLQNKSTDYGSVKRKTENLNSDSDIQNKRTKSIEENNSLPPIVSTNGITDGDTEMQESKKNVIINGFNEDDEDDEDEADFEDV</sequence>
<reference key="1">
    <citation type="journal article" date="2000" name="Bioorg. Khim.">
        <title>Chromosomal localization of the rpb9+ and tfa1+ genes encoding components of the mRNA synthesis machinery of Schizosaccharomyces pombe.</title>
        <authorList>
            <person name="Shpakovski G.V."/>
            <person name="Baranova G.M."/>
        </authorList>
    </citation>
    <scope>NUCLEOTIDE SEQUENCE [GENOMIC DNA / MRNA]</scope>
    <scope>SUBUNIT</scope>
    <source>
        <strain>972 / ATCC 24843</strain>
    </source>
</reference>
<reference key="2">
    <citation type="journal article" date="2005" name="Genes Cells">
        <title>Studies of Schizosaccharomyces pombe TFIIE indicate conformational and functional changes in RNA polymerase II at transcription initiation.</title>
        <authorList>
            <person name="Hayashi K."/>
            <person name="Watanabe T."/>
            <person name="Tanaka A."/>
            <person name="Furumoto T."/>
            <person name="Sato-Tsuchiya C."/>
            <person name="Kimura M."/>
            <person name="Yokoi M."/>
            <person name="Ishihama A."/>
            <person name="Hanaoka F."/>
            <person name="Ohkuma Y."/>
        </authorList>
    </citation>
    <scope>NUCLEOTIDE SEQUENCE [MRNA]</scope>
    <source>
        <strain>972 / ATCC 24843</strain>
    </source>
</reference>
<reference key="3">
    <citation type="journal article" date="2002" name="Nature">
        <title>The genome sequence of Schizosaccharomyces pombe.</title>
        <authorList>
            <person name="Wood V."/>
            <person name="Gwilliam R."/>
            <person name="Rajandream M.A."/>
            <person name="Lyne M.H."/>
            <person name="Lyne R."/>
            <person name="Stewart A."/>
            <person name="Sgouros J.G."/>
            <person name="Peat N."/>
            <person name="Hayles J."/>
            <person name="Baker S.G."/>
            <person name="Basham D."/>
            <person name="Bowman S."/>
            <person name="Brooks K."/>
            <person name="Brown D."/>
            <person name="Brown S."/>
            <person name="Chillingworth T."/>
            <person name="Churcher C.M."/>
            <person name="Collins M."/>
            <person name="Connor R."/>
            <person name="Cronin A."/>
            <person name="Davis P."/>
            <person name="Feltwell T."/>
            <person name="Fraser A."/>
            <person name="Gentles S."/>
            <person name="Goble A."/>
            <person name="Hamlin N."/>
            <person name="Harris D.E."/>
            <person name="Hidalgo J."/>
            <person name="Hodgson G."/>
            <person name="Holroyd S."/>
            <person name="Hornsby T."/>
            <person name="Howarth S."/>
            <person name="Huckle E.J."/>
            <person name="Hunt S."/>
            <person name="Jagels K."/>
            <person name="James K.D."/>
            <person name="Jones L."/>
            <person name="Jones M."/>
            <person name="Leather S."/>
            <person name="McDonald S."/>
            <person name="McLean J."/>
            <person name="Mooney P."/>
            <person name="Moule S."/>
            <person name="Mungall K.L."/>
            <person name="Murphy L.D."/>
            <person name="Niblett D."/>
            <person name="Odell C."/>
            <person name="Oliver K."/>
            <person name="O'Neil S."/>
            <person name="Pearson D."/>
            <person name="Quail M.A."/>
            <person name="Rabbinowitsch E."/>
            <person name="Rutherford K.M."/>
            <person name="Rutter S."/>
            <person name="Saunders D."/>
            <person name="Seeger K."/>
            <person name="Sharp S."/>
            <person name="Skelton J."/>
            <person name="Simmonds M.N."/>
            <person name="Squares R."/>
            <person name="Squares S."/>
            <person name="Stevens K."/>
            <person name="Taylor K."/>
            <person name="Taylor R.G."/>
            <person name="Tivey A."/>
            <person name="Walsh S.V."/>
            <person name="Warren T."/>
            <person name="Whitehead S."/>
            <person name="Woodward J.R."/>
            <person name="Volckaert G."/>
            <person name="Aert R."/>
            <person name="Robben J."/>
            <person name="Grymonprez B."/>
            <person name="Weltjens I."/>
            <person name="Vanstreels E."/>
            <person name="Rieger M."/>
            <person name="Schaefer M."/>
            <person name="Mueller-Auer S."/>
            <person name="Gabel C."/>
            <person name="Fuchs M."/>
            <person name="Duesterhoeft A."/>
            <person name="Fritzc C."/>
            <person name="Holzer E."/>
            <person name="Moestl D."/>
            <person name="Hilbert H."/>
            <person name="Borzym K."/>
            <person name="Langer I."/>
            <person name="Beck A."/>
            <person name="Lehrach H."/>
            <person name="Reinhardt R."/>
            <person name="Pohl T.M."/>
            <person name="Eger P."/>
            <person name="Zimmermann W."/>
            <person name="Wedler H."/>
            <person name="Wambutt R."/>
            <person name="Purnelle B."/>
            <person name="Goffeau A."/>
            <person name="Cadieu E."/>
            <person name="Dreano S."/>
            <person name="Gloux S."/>
            <person name="Lelaure V."/>
            <person name="Mottier S."/>
            <person name="Galibert F."/>
            <person name="Aves S.J."/>
            <person name="Xiang Z."/>
            <person name="Hunt C."/>
            <person name="Moore K."/>
            <person name="Hurst S.M."/>
            <person name="Lucas M."/>
            <person name="Rochet M."/>
            <person name="Gaillardin C."/>
            <person name="Tallada V.A."/>
            <person name="Garzon A."/>
            <person name="Thode G."/>
            <person name="Daga R.R."/>
            <person name="Cruzado L."/>
            <person name="Jimenez J."/>
            <person name="Sanchez M."/>
            <person name="del Rey F."/>
            <person name="Benito J."/>
            <person name="Dominguez A."/>
            <person name="Revuelta J.L."/>
            <person name="Moreno S."/>
            <person name="Armstrong J."/>
            <person name="Forsburg S.L."/>
            <person name="Cerutti L."/>
            <person name="Lowe T."/>
            <person name="McCombie W.R."/>
            <person name="Paulsen I."/>
            <person name="Potashkin J."/>
            <person name="Shpakovski G.V."/>
            <person name="Ussery D."/>
            <person name="Barrell B.G."/>
            <person name="Nurse P."/>
        </authorList>
    </citation>
    <scope>NUCLEOTIDE SEQUENCE [LARGE SCALE GENOMIC DNA]</scope>
    <source>
        <strain>972 / ATCC 24843</strain>
    </source>
</reference>
<reference key="4">
    <citation type="journal article" date="2011" name="Science">
        <title>Comparative functional genomics of the fission yeasts.</title>
        <authorList>
            <person name="Rhind N."/>
            <person name="Chen Z."/>
            <person name="Yassour M."/>
            <person name="Thompson D.A."/>
            <person name="Haas B.J."/>
            <person name="Habib N."/>
            <person name="Wapinski I."/>
            <person name="Roy S."/>
            <person name="Lin M.F."/>
            <person name="Heiman D.I."/>
            <person name="Young S.K."/>
            <person name="Furuya K."/>
            <person name="Guo Y."/>
            <person name="Pidoux A."/>
            <person name="Chen H.M."/>
            <person name="Robbertse B."/>
            <person name="Goldberg J.M."/>
            <person name="Aoki K."/>
            <person name="Bayne E.H."/>
            <person name="Berlin A.M."/>
            <person name="Desjardins C.A."/>
            <person name="Dobbs E."/>
            <person name="Dukaj L."/>
            <person name="Fan L."/>
            <person name="FitzGerald M.G."/>
            <person name="French C."/>
            <person name="Gujja S."/>
            <person name="Hansen K."/>
            <person name="Keifenheim D."/>
            <person name="Levin J.Z."/>
            <person name="Mosher R.A."/>
            <person name="Mueller C.A."/>
            <person name="Pfiffner J."/>
            <person name="Priest M."/>
            <person name="Russ C."/>
            <person name="Smialowska A."/>
            <person name="Swoboda P."/>
            <person name="Sykes S.M."/>
            <person name="Vaughn M."/>
            <person name="Vengrova S."/>
            <person name="Yoder R."/>
            <person name="Zeng Q."/>
            <person name="Allshire R."/>
            <person name="Baulcombe D."/>
            <person name="Birren B.W."/>
            <person name="Brown W."/>
            <person name="Ekwall K."/>
            <person name="Kellis M."/>
            <person name="Leatherwood J."/>
            <person name="Levin H."/>
            <person name="Margalit H."/>
            <person name="Martienssen R."/>
            <person name="Nieduszynski C.A."/>
            <person name="Spatafora J.W."/>
            <person name="Friedman N."/>
            <person name="Dalgaard J.Z."/>
            <person name="Baumann P."/>
            <person name="Niki H."/>
            <person name="Regev A."/>
            <person name="Nusbaum C."/>
        </authorList>
    </citation>
    <scope>REVISION OF GENE MODEL</scope>
</reference>
<reference key="5">
    <citation type="journal article" date="2006" name="Nat. Biotechnol.">
        <title>ORFeome cloning and global analysis of protein localization in the fission yeast Schizosaccharomyces pombe.</title>
        <authorList>
            <person name="Matsuyama A."/>
            <person name="Arai R."/>
            <person name="Yashiroda Y."/>
            <person name="Shirai A."/>
            <person name="Kamata A."/>
            <person name="Sekido S."/>
            <person name="Kobayashi Y."/>
            <person name="Hashimoto A."/>
            <person name="Hamamoto M."/>
            <person name="Hiraoka Y."/>
            <person name="Horinouchi S."/>
            <person name="Yoshida M."/>
        </authorList>
    </citation>
    <scope>SUBCELLULAR LOCATION [LARGE SCALE ANALYSIS]</scope>
</reference>
<name>T2EA_SCHPO</name>
<dbReference type="EMBL" id="AF237419">
    <property type="protein sequence ID" value="AAL55662.1"/>
    <property type="molecule type" value="Genomic_DNA"/>
</dbReference>
<dbReference type="EMBL" id="AJ310560">
    <property type="protein sequence ID" value="CAC32853.1"/>
    <property type="molecule type" value="mRNA"/>
</dbReference>
<dbReference type="EMBL" id="AB176672">
    <property type="protein sequence ID" value="BAD74158.1"/>
    <property type="molecule type" value="mRNA"/>
</dbReference>
<dbReference type="EMBL" id="CU329670">
    <property type="protein sequence ID" value="CAB93849.3"/>
    <property type="molecule type" value="Genomic_DNA"/>
</dbReference>
<dbReference type="PIR" id="T50301">
    <property type="entry name" value="T50301"/>
</dbReference>
<dbReference type="RefSeq" id="NP_594701.3">
    <property type="nucleotide sequence ID" value="NM_001020129.2"/>
</dbReference>
<dbReference type="SMR" id="Q9P3W1"/>
<dbReference type="BioGRID" id="280041">
    <property type="interactions" value="5"/>
</dbReference>
<dbReference type="FunCoup" id="Q9P3W1">
    <property type="interactions" value="396"/>
</dbReference>
<dbReference type="IntAct" id="Q9P3W1">
    <property type="interactions" value="1"/>
</dbReference>
<dbReference type="STRING" id="284812.Q9P3W1"/>
<dbReference type="iPTMnet" id="Q9P3W1"/>
<dbReference type="PaxDb" id="4896-SPAC458.07.1"/>
<dbReference type="EnsemblFungi" id="SPAC458.07.1">
    <property type="protein sequence ID" value="SPAC458.07.1:pep"/>
    <property type="gene ID" value="SPAC458.07"/>
</dbReference>
<dbReference type="GeneID" id="2543627"/>
<dbReference type="KEGG" id="spo:2543627"/>
<dbReference type="PomBase" id="SPAC458.07">
    <property type="gene designation" value="tfa1"/>
</dbReference>
<dbReference type="VEuPathDB" id="FungiDB:SPAC458.07"/>
<dbReference type="eggNOG" id="KOG2593">
    <property type="taxonomic scope" value="Eukaryota"/>
</dbReference>
<dbReference type="HOGENOM" id="CLU_035744_2_1_1"/>
<dbReference type="InParanoid" id="Q9P3W1"/>
<dbReference type="OMA" id="DAIKWKV"/>
<dbReference type="Reactome" id="R-SPO-674695">
    <property type="pathway name" value="RNA Polymerase II Pre-transcription Events"/>
</dbReference>
<dbReference type="Reactome" id="R-SPO-6807505">
    <property type="pathway name" value="RNA polymerase II transcribes snRNA genes"/>
</dbReference>
<dbReference type="Reactome" id="R-SPO-73776">
    <property type="pathway name" value="RNA Polymerase II Promoter Escape"/>
</dbReference>
<dbReference type="Reactome" id="R-SPO-73779">
    <property type="pathway name" value="RNA Polymerase II Transcription Pre-Initiation And Promoter Opening"/>
</dbReference>
<dbReference type="Reactome" id="R-SPO-75953">
    <property type="pathway name" value="RNA Polymerase II Transcription Initiation"/>
</dbReference>
<dbReference type="Reactome" id="R-SPO-76042">
    <property type="pathway name" value="RNA Polymerase II Transcription Initiation And Promoter Clearance"/>
</dbReference>
<dbReference type="PRO" id="PR:Q9P3W1"/>
<dbReference type="Proteomes" id="UP000002485">
    <property type="component" value="Chromosome I"/>
</dbReference>
<dbReference type="GO" id="GO:0005634">
    <property type="term" value="C:nucleus"/>
    <property type="evidence" value="ECO:0007005"/>
    <property type="project" value="PomBase"/>
</dbReference>
<dbReference type="GO" id="GO:0005673">
    <property type="term" value="C:transcription factor TFIIE complex"/>
    <property type="evidence" value="ECO:0000314"/>
    <property type="project" value="PomBase"/>
</dbReference>
<dbReference type="GO" id="GO:0016251">
    <property type="term" value="F:RNA polymerase II general transcription initiation factor activity"/>
    <property type="evidence" value="ECO:0000314"/>
    <property type="project" value="PomBase"/>
</dbReference>
<dbReference type="GO" id="GO:0008270">
    <property type="term" value="F:zinc ion binding"/>
    <property type="evidence" value="ECO:0007669"/>
    <property type="project" value="UniProtKB-KW"/>
</dbReference>
<dbReference type="GO" id="GO:0006367">
    <property type="term" value="P:transcription initiation at RNA polymerase II promoter"/>
    <property type="evidence" value="ECO:0000314"/>
    <property type="project" value="PomBase"/>
</dbReference>
<dbReference type="Gene3D" id="3.30.40.10">
    <property type="entry name" value="Zinc/RING finger domain, C3HC4 (zinc finger)"/>
    <property type="match status" value="1"/>
</dbReference>
<dbReference type="InterPro" id="IPR039997">
    <property type="entry name" value="TFE"/>
</dbReference>
<dbReference type="InterPro" id="IPR017919">
    <property type="entry name" value="TFIIE/TFIIEa_HTH"/>
</dbReference>
<dbReference type="InterPro" id="IPR002853">
    <property type="entry name" value="TFIIE_asu"/>
</dbReference>
<dbReference type="InterPro" id="IPR024550">
    <property type="entry name" value="TFIIEa/SarR/Rpc3_HTH_dom"/>
</dbReference>
<dbReference type="InterPro" id="IPR013083">
    <property type="entry name" value="Znf_RING/FYVE/PHD"/>
</dbReference>
<dbReference type="PANTHER" id="PTHR13097:SF7">
    <property type="entry name" value="GENERAL TRANSCRIPTION FACTOR IIE SUBUNIT 1"/>
    <property type="match status" value="1"/>
</dbReference>
<dbReference type="PANTHER" id="PTHR13097">
    <property type="entry name" value="TRANSCRIPTION INITIATION FACTOR IIE, ALPHA SUBUNIT"/>
    <property type="match status" value="1"/>
</dbReference>
<dbReference type="Pfam" id="PF02002">
    <property type="entry name" value="TFIIE_alpha"/>
    <property type="match status" value="1"/>
</dbReference>
<dbReference type="SMART" id="SM00531">
    <property type="entry name" value="TFIIE"/>
    <property type="match status" value="1"/>
</dbReference>
<dbReference type="SUPFAM" id="SSF57783">
    <property type="entry name" value="Zinc beta-ribbon"/>
    <property type="match status" value="1"/>
</dbReference>
<dbReference type="PROSITE" id="PS51344">
    <property type="entry name" value="HTH_TFE_IIE"/>
    <property type="match status" value="1"/>
</dbReference>
<evidence type="ECO:0000250" key="1"/>
<evidence type="ECO:0000255" key="2"/>
<evidence type="ECO:0000255" key="3">
    <source>
        <dbReference type="PROSITE-ProRule" id="PRU00676"/>
    </source>
</evidence>
<evidence type="ECO:0000256" key="4">
    <source>
        <dbReference type="SAM" id="MobiDB-lite"/>
    </source>
</evidence>
<evidence type="ECO:0000269" key="5">
    <source>
    </source>
</evidence>
<evidence type="ECO:0000269" key="6">
    <source>
    </source>
</evidence>
<evidence type="ECO:0000305" key="7"/>
<proteinExistence type="evidence at protein level"/>